<gene>
    <name type="primary">37</name>
</gene>
<keyword id="KW-0143">Chaperone</keyword>
<keyword id="KW-1185">Reference proteome</keyword>
<keyword id="KW-1188">Viral release from host cell</keyword>
<keyword id="KW-1245">Viral tail assembly</keyword>
<keyword id="KW-1246">Viral tail fiber assembly</keyword>
<feature type="chain" id="PRO_0000070312" description="Probable tail fiber assembly protein">
    <location>
        <begin position="1"/>
        <end position="155"/>
    </location>
</feature>
<evidence type="ECO:0000250" key="1"/>
<evidence type="ECO:0000305" key="2"/>
<comment type="function">
    <text evidence="1">Chaperone involved in tail fiber assembly.</text>
</comment>
<comment type="similarity">
    <text evidence="2">Belongs to the tfa family.</text>
</comment>
<name>TFA_BPAPS</name>
<protein>
    <recommendedName>
        <fullName>Probable tail fiber assembly protein</fullName>
    </recommendedName>
    <alternativeName>
        <fullName>P37</fullName>
    </alternativeName>
</protein>
<organismHost>
    <name type="scientific">Escherichia coli</name>
    <dbReference type="NCBI Taxonomy" id="562"/>
</organismHost>
<organism>
    <name type="scientific">Acyrthosiphon pisum secondary endosymbiont phage 1</name>
    <name type="common">Bacteriophage APSE-1</name>
    <dbReference type="NCBI Taxonomy" id="2682836"/>
    <lineage>
        <taxon>Viruses</taxon>
        <taxon>Duplodnaviria</taxon>
        <taxon>Heunggongvirae</taxon>
        <taxon>Uroviricota</taxon>
        <taxon>Caudoviricetes</taxon>
        <taxon>Sendosyvirus</taxon>
        <taxon>Sendosyvirus APSE1</taxon>
    </lineage>
</organism>
<accession>Q9T1R1</accession>
<proteinExistence type="inferred from homology"/>
<sequence length="155" mass="17724">MDCNRMVIMNSVNEETYYFGQRKLAWFAGSMKKDYIEAGSWDDKAKAVPYSVYREFALNPAPIGKTLGISEKGDPIWVDIPPKTKHQLITEAEDKKSGLMQGAREVISPLQDAIDLEMATQEETQKLTAWKRYRVLLNRLDTSNAPDIDWPKKPE</sequence>
<reference key="1">
    <citation type="journal article" date="1999" name="Virology">
        <title>Isolation and characterization of APSE-1, a bacteriophage infecting the secondary endosymbiont of acyrthosiphon pisum.</title>
        <authorList>
            <person name="van der Wilk F."/>
            <person name="Dullemans A.M."/>
            <person name="Verbeek M."/>
            <person name="van den Heuvel J.F.J.M."/>
        </authorList>
    </citation>
    <scope>NUCLEOTIDE SEQUENCE [LARGE SCALE GENOMIC DNA]</scope>
</reference>
<dbReference type="EMBL" id="AF157835">
    <property type="protein sequence ID" value="AAF03980.1"/>
    <property type="molecule type" value="Genomic_DNA"/>
</dbReference>
<dbReference type="RefSeq" id="NP_050998.1">
    <property type="nucleotide sequence ID" value="NC_000935.1"/>
</dbReference>
<dbReference type="SMR" id="Q9T1R1"/>
<dbReference type="KEGG" id="vg:1262331"/>
<dbReference type="Proteomes" id="UP000000853">
    <property type="component" value="Genome"/>
</dbReference>
<dbReference type="GO" id="GO:0098004">
    <property type="term" value="P:virus tail fiber assembly"/>
    <property type="evidence" value="ECO:0007669"/>
    <property type="project" value="UniProtKB-KW"/>
</dbReference>
<dbReference type="InterPro" id="IPR003458">
    <property type="entry name" value="Phage_T4_Gp38_tail_assem"/>
</dbReference>
<dbReference type="InterPro" id="IPR051220">
    <property type="entry name" value="TFA_Chaperone"/>
</dbReference>
<dbReference type="PANTHER" id="PTHR34413:SF2">
    <property type="entry name" value="PROPHAGE TAIL FIBER ASSEMBLY PROTEIN HOMOLOG TFAE-RELATED"/>
    <property type="match status" value="1"/>
</dbReference>
<dbReference type="PANTHER" id="PTHR34413">
    <property type="entry name" value="PROPHAGE TAIL FIBER ASSEMBLY PROTEIN HOMOLOG TFAE-RELATED-RELATED"/>
    <property type="match status" value="1"/>
</dbReference>
<dbReference type="Pfam" id="PF02413">
    <property type="entry name" value="Caudo_TAP"/>
    <property type="match status" value="1"/>
</dbReference>